<proteinExistence type="inferred from homology"/>
<gene>
    <name evidence="1" type="primary">anmK</name>
    <name type="ordered locus">lpg1403</name>
</gene>
<accession>Q5ZVN7</accession>
<name>ANMK_LEGPH</name>
<evidence type="ECO:0000255" key="1">
    <source>
        <dbReference type="HAMAP-Rule" id="MF_01270"/>
    </source>
</evidence>
<keyword id="KW-0067">ATP-binding</keyword>
<keyword id="KW-0119">Carbohydrate metabolism</keyword>
<keyword id="KW-0418">Kinase</keyword>
<keyword id="KW-0547">Nucleotide-binding</keyword>
<keyword id="KW-1185">Reference proteome</keyword>
<keyword id="KW-0808">Transferase</keyword>
<protein>
    <recommendedName>
        <fullName evidence="1">Anhydro-N-acetylmuramic acid kinase</fullName>
        <ecNumber evidence="1">2.7.1.170</ecNumber>
    </recommendedName>
    <alternativeName>
        <fullName evidence="1">AnhMurNAc kinase</fullName>
    </alternativeName>
</protein>
<feature type="chain" id="PRO_0000250010" description="Anhydro-N-acetylmuramic acid kinase">
    <location>
        <begin position="1"/>
        <end position="366"/>
    </location>
</feature>
<feature type="binding site" evidence="1">
    <location>
        <begin position="10"/>
        <end position="17"/>
    </location>
    <ligand>
        <name>ATP</name>
        <dbReference type="ChEBI" id="CHEBI:30616"/>
    </ligand>
</feature>
<dbReference type="EC" id="2.7.1.170" evidence="1"/>
<dbReference type="EMBL" id="AE017354">
    <property type="protein sequence ID" value="AAU27485.1"/>
    <property type="molecule type" value="Genomic_DNA"/>
</dbReference>
<dbReference type="RefSeq" id="WP_010947132.1">
    <property type="nucleotide sequence ID" value="NC_002942.5"/>
</dbReference>
<dbReference type="RefSeq" id="YP_095432.1">
    <property type="nucleotide sequence ID" value="NC_002942.5"/>
</dbReference>
<dbReference type="SMR" id="Q5ZVN7"/>
<dbReference type="STRING" id="272624.lpg1403"/>
<dbReference type="PaxDb" id="272624-lpg1403"/>
<dbReference type="KEGG" id="lpn:lpg1403"/>
<dbReference type="PATRIC" id="fig|272624.6.peg.1473"/>
<dbReference type="eggNOG" id="COG2377">
    <property type="taxonomic scope" value="Bacteria"/>
</dbReference>
<dbReference type="HOGENOM" id="CLU_038782_0_0_6"/>
<dbReference type="OrthoDB" id="9763949at2"/>
<dbReference type="UniPathway" id="UPA00343"/>
<dbReference type="UniPathway" id="UPA00544"/>
<dbReference type="Proteomes" id="UP000000609">
    <property type="component" value="Chromosome"/>
</dbReference>
<dbReference type="GO" id="GO:0005524">
    <property type="term" value="F:ATP binding"/>
    <property type="evidence" value="ECO:0007669"/>
    <property type="project" value="UniProtKB-UniRule"/>
</dbReference>
<dbReference type="GO" id="GO:0016301">
    <property type="term" value="F:kinase activity"/>
    <property type="evidence" value="ECO:0007669"/>
    <property type="project" value="UniProtKB-KW"/>
</dbReference>
<dbReference type="GO" id="GO:0016773">
    <property type="term" value="F:phosphotransferase activity, alcohol group as acceptor"/>
    <property type="evidence" value="ECO:0007669"/>
    <property type="project" value="UniProtKB-UniRule"/>
</dbReference>
<dbReference type="GO" id="GO:0097175">
    <property type="term" value="P:1,6-anhydro-N-acetyl-beta-muramic acid catabolic process"/>
    <property type="evidence" value="ECO:0007669"/>
    <property type="project" value="UniProtKB-UniRule"/>
</dbReference>
<dbReference type="GO" id="GO:0006040">
    <property type="term" value="P:amino sugar metabolic process"/>
    <property type="evidence" value="ECO:0007669"/>
    <property type="project" value="InterPro"/>
</dbReference>
<dbReference type="GO" id="GO:0009254">
    <property type="term" value="P:peptidoglycan turnover"/>
    <property type="evidence" value="ECO:0007669"/>
    <property type="project" value="UniProtKB-UniRule"/>
</dbReference>
<dbReference type="CDD" id="cd24050">
    <property type="entry name" value="ASKHA_NBD_ANMK"/>
    <property type="match status" value="1"/>
</dbReference>
<dbReference type="Gene3D" id="3.30.420.40">
    <property type="match status" value="2"/>
</dbReference>
<dbReference type="HAMAP" id="MF_01270">
    <property type="entry name" value="AnhMurNAc_kinase"/>
    <property type="match status" value="1"/>
</dbReference>
<dbReference type="InterPro" id="IPR005338">
    <property type="entry name" value="Anhydro_N_Ac-Mur_kinase"/>
</dbReference>
<dbReference type="InterPro" id="IPR043129">
    <property type="entry name" value="ATPase_NBD"/>
</dbReference>
<dbReference type="NCBIfam" id="NF007139">
    <property type="entry name" value="PRK09585.1-3"/>
    <property type="match status" value="1"/>
</dbReference>
<dbReference type="PANTHER" id="PTHR30605">
    <property type="entry name" value="ANHYDRO-N-ACETYLMURAMIC ACID KINASE"/>
    <property type="match status" value="1"/>
</dbReference>
<dbReference type="PANTHER" id="PTHR30605:SF0">
    <property type="entry name" value="ANHYDRO-N-ACETYLMURAMIC ACID KINASE"/>
    <property type="match status" value="1"/>
</dbReference>
<dbReference type="Pfam" id="PF03702">
    <property type="entry name" value="AnmK"/>
    <property type="match status" value="1"/>
</dbReference>
<dbReference type="SUPFAM" id="SSF53067">
    <property type="entry name" value="Actin-like ATPase domain"/>
    <property type="match status" value="1"/>
</dbReference>
<organism>
    <name type="scientific">Legionella pneumophila subsp. pneumophila (strain Philadelphia 1 / ATCC 33152 / DSM 7513)</name>
    <dbReference type="NCBI Taxonomy" id="272624"/>
    <lineage>
        <taxon>Bacteria</taxon>
        <taxon>Pseudomonadati</taxon>
        <taxon>Pseudomonadota</taxon>
        <taxon>Gammaproteobacteria</taxon>
        <taxon>Legionellales</taxon>
        <taxon>Legionellaceae</taxon>
        <taxon>Legionella</taxon>
    </lineage>
</organism>
<sequence>MSLYIGLMSGTSMDGIDAALLELPSNHLIHGITKQYSDDVRRNLDDLIMGNHLTLASICQLNTLIGREFAEAVRQLLSEIKVHPKEIQAIGSHGQTVCHDTSGNIPYTLQLGCGHTISSLTGITVVADFRTRDLVNGGQGAPFAPLYHQQIFSKVNESVAVVNIGGIANVTFIAKNQMTRGWDIGPGNCLMDAWIYKNKGALFDKSGVWASQGEVIYPLLEYLLQDPFFHLDSPKSIGKEYFSLSWLQKHLKPDYTPADIQATLLALTAHTIAETILNESGEIKQLYLCGGGAHNTHLKENLARLLPGIAVKSIAELGISPDYLEAMMFAWLAAQTINQIPVNLTSITGAKGIAILGAVYPIIKSY</sequence>
<comment type="function">
    <text evidence="1">Catalyzes the specific phosphorylation of 1,6-anhydro-N-acetylmuramic acid (anhMurNAc) with the simultaneous cleavage of the 1,6-anhydro ring, generating MurNAc-6-P. Is required for the utilization of anhMurNAc either imported from the medium or derived from its own cell wall murein, and thus plays a role in cell wall recycling.</text>
</comment>
<comment type="catalytic activity">
    <reaction evidence="1">
        <text>1,6-anhydro-N-acetyl-beta-muramate + ATP + H2O = N-acetyl-D-muramate 6-phosphate + ADP + H(+)</text>
        <dbReference type="Rhea" id="RHEA:24952"/>
        <dbReference type="ChEBI" id="CHEBI:15377"/>
        <dbReference type="ChEBI" id="CHEBI:15378"/>
        <dbReference type="ChEBI" id="CHEBI:30616"/>
        <dbReference type="ChEBI" id="CHEBI:58690"/>
        <dbReference type="ChEBI" id="CHEBI:58722"/>
        <dbReference type="ChEBI" id="CHEBI:456216"/>
        <dbReference type="EC" id="2.7.1.170"/>
    </reaction>
</comment>
<comment type="pathway">
    <text evidence="1">Amino-sugar metabolism; 1,6-anhydro-N-acetylmuramate degradation.</text>
</comment>
<comment type="pathway">
    <text evidence="1">Cell wall biogenesis; peptidoglycan recycling.</text>
</comment>
<comment type="similarity">
    <text evidence="1">Belongs to the anhydro-N-acetylmuramic acid kinase family.</text>
</comment>
<reference key="1">
    <citation type="journal article" date="2004" name="Science">
        <title>The genomic sequence of the accidental pathogen Legionella pneumophila.</title>
        <authorList>
            <person name="Chien M."/>
            <person name="Morozova I."/>
            <person name="Shi S."/>
            <person name="Sheng H."/>
            <person name="Chen J."/>
            <person name="Gomez S.M."/>
            <person name="Asamani G."/>
            <person name="Hill K."/>
            <person name="Nuara J."/>
            <person name="Feder M."/>
            <person name="Rineer J."/>
            <person name="Greenberg J.J."/>
            <person name="Steshenko V."/>
            <person name="Park S.H."/>
            <person name="Zhao B."/>
            <person name="Teplitskaya E."/>
            <person name="Edwards J.R."/>
            <person name="Pampou S."/>
            <person name="Georghiou A."/>
            <person name="Chou I.-C."/>
            <person name="Iannuccilli W."/>
            <person name="Ulz M.E."/>
            <person name="Kim D.H."/>
            <person name="Geringer-Sameth A."/>
            <person name="Goldsberry C."/>
            <person name="Morozov P."/>
            <person name="Fischer S.G."/>
            <person name="Segal G."/>
            <person name="Qu X."/>
            <person name="Rzhetsky A."/>
            <person name="Zhang P."/>
            <person name="Cayanis E."/>
            <person name="De Jong P.J."/>
            <person name="Ju J."/>
            <person name="Kalachikov S."/>
            <person name="Shuman H.A."/>
            <person name="Russo J.J."/>
        </authorList>
    </citation>
    <scope>NUCLEOTIDE SEQUENCE [LARGE SCALE GENOMIC DNA]</scope>
    <source>
        <strain>Philadelphia 1 / ATCC 33152 / DSM 7513</strain>
    </source>
</reference>